<dbReference type="EC" id="3.1.13.5" evidence="1"/>
<dbReference type="EMBL" id="CP000469">
    <property type="protein sequence ID" value="ABK48614.1"/>
    <property type="molecule type" value="Genomic_DNA"/>
</dbReference>
<dbReference type="SMR" id="A0KXU5"/>
<dbReference type="STRING" id="94122.Shewana3_2385"/>
<dbReference type="KEGG" id="shn:Shewana3_2385"/>
<dbReference type="eggNOG" id="COG0349">
    <property type="taxonomic scope" value="Bacteria"/>
</dbReference>
<dbReference type="HOGENOM" id="CLU_042387_0_1_6"/>
<dbReference type="Proteomes" id="UP000002589">
    <property type="component" value="Chromosome"/>
</dbReference>
<dbReference type="GO" id="GO:0005737">
    <property type="term" value="C:cytoplasm"/>
    <property type="evidence" value="ECO:0007669"/>
    <property type="project" value="UniProtKB-SubCell"/>
</dbReference>
<dbReference type="GO" id="GO:0008408">
    <property type="term" value="F:3'-5' exonuclease activity"/>
    <property type="evidence" value="ECO:0007669"/>
    <property type="project" value="InterPro"/>
</dbReference>
<dbReference type="GO" id="GO:0003676">
    <property type="term" value="F:nucleic acid binding"/>
    <property type="evidence" value="ECO:0007669"/>
    <property type="project" value="InterPro"/>
</dbReference>
<dbReference type="GO" id="GO:0000166">
    <property type="term" value="F:nucleotide binding"/>
    <property type="evidence" value="ECO:0007669"/>
    <property type="project" value="InterPro"/>
</dbReference>
<dbReference type="GO" id="GO:0033890">
    <property type="term" value="F:ribonuclease D activity"/>
    <property type="evidence" value="ECO:0007669"/>
    <property type="project" value="UniProtKB-UniRule"/>
</dbReference>
<dbReference type="GO" id="GO:0042780">
    <property type="term" value="P:tRNA 3'-end processing"/>
    <property type="evidence" value="ECO:0007669"/>
    <property type="project" value="UniProtKB-UniRule"/>
</dbReference>
<dbReference type="CDD" id="cd06142">
    <property type="entry name" value="RNaseD_exo"/>
    <property type="match status" value="1"/>
</dbReference>
<dbReference type="FunFam" id="1.10.150.80:FF:000038">
    <property type="entry name" value="Ribonuclease D"/>
    <property type="match status" value="1"/>
</dbReference>
<dbReference type="FunFam" id="3.30.420.10:FF:000060">
    <property type="entry name" value="Ribonuclease D"/>
    <property type="match status" value="1"/>
</dbReference>
<dbReference type="Gene3D" id="1.10.150.80">
    <property type="entry name" value="HRDC domain"/>
    <property type="match status" value="2"/>
</dbReference>
<dbReference type="Gene3D" id="3.30.420.10">
    <property type="entry name" value="Ribonuclease H-like superfamily/Ribonuclease H"/>
    <property type="match status" value="1"/>
</dbReference>
<dbReference type="HAMAP" id="MF_01899">
    <property type="entry name" value="RNase_D"/>
    <property type="match status" value="1"/>
</dbReference>
<dbReference type="InterPro" id="IPR002562">
    <property type="entry name" value="3'-5'_exonuclease_dom"/>
</dbReference>
<dbReference type="InterPro" id="IPR010997">
    <property type="entry name" value="HRDC-like_sf"/>
</dbReference>
<dbReference type="InterPro" id="IPR002121">
    <property type="entry name" value="HRDC_dom"/>
</dbReference>
<dbReference type="InterPro" id="IPR044876">
    <property type="entry name" value="HRDC_dom_sf"/>
</dbReference>
<dbReference type="InterPro" id="IPR006292">
    <property type="entry name" value="RNase_D"/>
</dbReference>
<dbReference type="InterPro" id="IPR051086">
    <property type="entry name" value="RNase_D-like"/>
</dbReference>
<dbReference type="InterPro" id="IPR048579">
    <property type="entry name" value="RNAseD_HRDC_C"/>
</dbReference>
<dbReference type="InterPro" id="IPR012337">
    <property type="entry name" value="RNaseH-like_sf"/>
</dbReference>
<dbReference type="InterPro" id="IPR036397">
    <property type="entry name" value="RNaseH_sf"/>
</dbReference>
<dbReference type="NCBIfam" id="TIGR01388">
    <property type="entry name" value="rnd"/>
    <property type="match status" value="1"/>
</dbReference>
<dbReference type="PANTHER" id="PTHR47649">
    <property type="entry name" value="RIBONUCLEASE D"/>
    <property type="match status" value="1"/>
</dbReference>
<dbReference type="PANTHER" id="PTHR47649:SF1">
    <property type="entry name" value="RIBONUCLEASE D"/>
    <property type="match status" value="1"/>
</dbReference>
<dbReference type="Pfam" id="PF01612">
    <property type="entry name" value="DNA_pol_A_exo1"/>
    <property type="match status" value="1"/>
</dbReference>
<dbReference type="Pfam" id="PF00570">
    <property type="entry name" value="HRDC"/>
    <property type="match status" value="1"/>
</dbReference>
<dbReference type="Pfam" id="PF21293">
    <property type="entry name" value="RNAseD_HRDC_C"/>
    <property type="match status" value="1"/>
</dbReference>
<dbReference type="SMART" id="SM00474">
    <property type="entry name" value="35EXOc"/>
    <property type="match status" value="1"/>
</dbReference>
<dbReference type="SMART" id="SM00341">
    <property type="entry name" value="HRDC"/>
    <property type="match status" value="1"/>
</dbReference>
<dbReference type="SUPFAM" id="SSF47819">
    <property type="entry name" value="HRDC-like"/>
    <property type="match status" value="2"/>
</dbReference>
<dbReference type="SUPFAM" id="SSF53098">
    <property type="entry name" value="Ribonuclease H-like"/>
    <property type="match status" value="1"/>
</dbReference>
<dbReference type="PROSITE" id="PS50967">
    <property type="entry name" value="HRDC"/>
    <property type="match status" value="1"/>
</dbReference>
<sequence>MSRLLFLWTVLNPQELEKNLSVFQYVSDEASLNALVAQYQQSPLLVLDTEFVRTRTYYAKLGLIQAYDGKTLALIDPVALPDLSAFWSLLDNPNIIKLVHSCSEDLEVFAHYGQRQPTPLFDSQIAASLCGMGHGLGYAKLVETCLGEVIDKGESRTDWMRRPLTEAQLSYAANDVLYLYQLYPQLADKLKAQDRLGWLYEEGERMTEGRLATPDMDTAYLRVKNAFQLTEHQLAYLKVLAKWRLEKALARDLALGFVIKDHGLIALAKKQPKSMGDLLKLNDLTEQEKRIHGKDILRVMQTADLSNPPELVDVLALKPGYKSAFKNIKTCLSELCEQHAIPMEMLGSKRHIHEYLQWRWDKQQGELPTVLSGWRGQIAAESLAKLDV</sequence>
<protein>
    <recommendedName>
        <fullName evidence="1">Ribonuclease D</fullName>
        <shortName evidence="1">RNase D</shortName>
        <ecNumber evidence="1">3.1.13.5</ecNumber>
    </recommendedName>
</protein>
<gene>
    <name evidence="1" type="primary">rnd</name>
    <name type="ordered locus">Shewana3_2385</name>
</gene>
<proteinExistence type="inferred from homology"/>
<name>RND_SHESA</name>
<keyword id="KW-0963">Cytoplasm</keyword>
<keyword id="KW-0269">Exonuclease</keyword>
<keyword id="KW-0378">Hydrolase</keyword>
<keyword id="KW-0540">Nuclease</keyword>
<keyword id="KW-0819">tRNA processing</keyword>
<evidence type="ECO:0000255" key="1">
    <source>
        <dbReference type="HAMAP-Rule" id="MF_01899"/>
    </source>
</evidence>
<comment type="function">
    <text evidence="1">Exonuclease involved in the 3' processing of various precursor tRNAs. Initiates hydrolysis at the 3'-terminus of an RNA molecule and releases 5'-mononucleotides.</text>
</comment>
<comment type="catalytic activity">
    <reaction evidence="1">
        <text>Exonucleolytic cleavage that removes extra residues from the 3'-terminus of tRNA to produce 5'-mononucleotides.</text>
        <dbReference type="EC" id="3.1.13.5"/>
    </reaction>
</comment>
<comment type="cofactor">
    <cofactor evidence="1">
        <name>a divalent metal cation</name>
        <dbReference type="ChEBI" id="CHEBI:60240"/>
    </cofactor>
</comment>
<comment type="subcellular location">
    <subcellularLocation>
        <location evidence="1">Cytoplasm</location>
    </subcellularLocation>
</comment>
<comment type="similarity">
    <text evidence="1">Belongs to the RNase D family.</text>
</comment>
<accession>A0KXU5</accession>
<organism>
    <name type="scientific">Shewanella sp. (strain ANA-3)</name>
    <dbReference type="NCBI Taxonomy" id="94122"/>
    <lineage>
        <taxon>Bacteria</taxon>
        <taxon>Pseudomonadati</taxon>
        <taxon>Pseudomonadota</taxon>
        <taxon>Gammaproteobacteria</taxon>
        <taxon>Alteromonadales</taxon>
        <taxon>Shewanellaceae</taxon>
        <taxon>Shewanella</taxon>
    </lineage>
</organism>
<reference key="1">
    <citation type="submission" date="2006-09" db="EMBL/GenBank/DDBJ databases">
        <title>Complete sequence of chromosome 1 of Shewanella sp. ANA-3.</title>
        <authorList>
            <person name="Copeland A."/>
            <person name="Lucas S."/>
            <person name="Lapidus A."/>
            <person name="Barry K."/>
            <person name="Detter J.C."/>
            <person name="Glavina del Rio T."/>
            <person name="Hammon N."/>
            <person name="Israni S."/>
            <person name="Dalin E."/>
            <person name="Tice H."/>
            <person name="Pitluck S."/>
            <person name="Chertkov O."/>
            <person name="Brettin T."/>
            <person name="Bruce D."/>
            <person name="Han C."/>
            <person name="Tapia R."/>
            <person name="Gilna P."/>
            <person name="Schmutz J."/>
            <person name="Larimer F."/>
            <person name="Land M."/>
            <person name="Hauser L."/>
            <person name="Kyrpides N."/>
            <person name="Kim E."/>
            <person name="Newman D."/>
            <person name="Salticov C."/>
            <person name="Konstantinidis K."/>
            <person name="Klappenback J."/>
            <person name="Tiedje J."/>
            <person name="Richardson P."/>
        </authorList>
    </citation>
    <scope>NUCLEOTIDE SEQUENCE [LARGE SCALE GENOMIC DNA]</scope>
    <source>
        <strain>ANA-3</strain>
    </source>
</reference>
<feature type="chain" id="PRO_0000411072" description="Ribonuclease D">
    <location>
        <begin position="1"/>
        <end position="388"/>
    </location>
</feature>
<feature type="domain" description="3'-5' exonuclease" evidence="1">
    <location>
        <begin position="24"/>
        <end position="191"/>
    </location>
</feature>
<feature type="domain" description="HRDC" evidence="1">
    <location>
        <begin position="230"/>
        <end position="310"/>
    </location>
</feature>